<dbReference type="EMBL" id="CP000627">
    <property type="protein sequence ID" value="ABQ21955.1"/>
    <property type="molecule type" value="Genomic_DNA"/>
</dbReference>
<dbReference type="EMBL" id="CP001235">
    <property type="protein sequence ID" value="ACP10696.1"/>
    <property type="molecule type" value="Genomic_DNA"/>
</dbReference>
<dbReference type="RefSeq" id="WP_001181007.1">
    <property type="nucleotide sequence ID" value="NZ_JAACZH010000007.1"/>
</dbReference>
<dbReference type="SMR" id="A5F550"/>
<dbReference type="GeneID" id="97539797"/>
<dbReference type="KEGG" id="vco:VC0395_A2175"/>
<dbReference type="KEGG" id="vcr:VC395_2710"/>
<dbReference type="PATRIC" id="fig|345073.21.peg.2610"/>
<dbReference type="eggNOG" id="COG0051">
    <property type="taxonomic scope" value="Bacteria"/>
</dbReference>
<dbReference type="HOGENOM" id="CLU_122625_1_3_6"/>
<dbReference type="OrthoDB" id="9804464at2"/>
<dbReference type="Proteomes" id="UP000000249">
    <property type="component" value="Chromosome 2"/>
</dbReference>
<dbReference type="GO" id="GO:1990904">
    <property type="term" value="C:ribonucleoprotein complex"/>
    <property type="evidence" value="ECO:0007669"/>
    <property type="project" value="UniProtKB-KW"/>
</dbReference>
<dbReference type="GO" id="GO:0005840">
    <property type="term" value="C:ribosome"/>
    <property type="evidence" value="ECO:0007669"/>
    <property type="project" value="UniProtKB-KW"/>
</dbReference>
<dbReference type="GO" id="GO:0003735">
    <property type="term" value="F:structural constituent of ribosome"/>
    <property type="evidence" value="ECO:0007669"/>
    <property type="project" value="InterPro"/>
</dbReference>
<dbReference type="GO" id="GO:0000049">
    <property type="term" value="F:tRNA binding"/>
    <property type="evidence" value="ECO:0007669"/>
    <property type="project" value="UniProtKB-UniRule"/>
</dbReference>
<dbReference type="GO" id="GO:0006412">
    <property type="term" value="P:translation"/>
    <property type="evidence" value="ECO:0007669"/>
    <property type="project" value="UniProtKB-UniRule"/>
</dbReference>
<dbReference type="FunFam" id="3.30.70.600:FF:000001">
    <property type="entry name" value="30S ribosomal protein S10"/>
    <property type="match status" value="1"/>
</dbReference>
<dbReference type="Gene3D" id="3.30.70.600">
    <property type="entry name" value="Ribosomal protein S10 domain"/>
    <property type="match status" value="1"/>
</dbReference>
<dbReference type="HAMAP" id="MF_00508">
    <property type="entry name" value="Ribosomal_uS10"/>
    <property type="match status" value="1"/>
</dbReference>
<dbReference type="InterPro" id="IPR001848">
    <property type="entry name" value="Ribosomal_uS10"/>
</dbReference>
<dbReference type="InterPro" id="IPR018268">
    <property type="entry name" value="Ribosomal_uS10_CS"/>
</dbReference>
<dbReference type="InterPro" id="IPR027486">
    <property type="entry name" value="Ribosomal_uS10_dom"/>
</dbReference>
<dbReference type="InterPro" id="IPR036838">
    <property type="entry name" value="Ribosomal_uS10_dom_sf"/>
</dbReference>
<dbReference type="NCBIfam" id="NF001861">
    <property type="entry name" value="PRK00596.1"/>
    <property type="match status" value="1"/>
</dbReference>
<dbReference type="NCBIfam" id="TIGR01049">
    <property type="entry name" value="rpsJ_bact"/>
    <property type="match status" value="1"/>
</dbReference>
<dbReference type="PANTHER" id="PTHR11700">
    <property type="entry name" value="30S RIBOSOMAL PROTEIN S10 FAMILY MEMBER"/>
    <property type="match status" value="1"/>
</dbReference>
<dbReference type="Pfam" id="PF00338">
    <property type="entry name" value="Ribosomal_S10"/>
    <property type="match status" value="1"/>
</dbReference>
<dbReference type="PRINTS" id="PR00971">
    <property type="entry name" value="RIBOSOMALS10"/>
</dbReference>
<dbReference type="SMART" id="SM01403">
    <property type="entry name" value="Ribosomal_S10"/>
    <property type="match status" value="1"/>
</dbReference>
<dbReference type="SUPFAM" id="SSF54999">
    <property type="entry name" value="Ribosomal protein S10"/>
    <property type="match status" value="1"/>
</dbReference>
<dbReference type="PROSITE" id="PS00361">
    <property type="entry name" value="RIBOSOMAL_S10"/>
    <property type="match status" value="1"/>
</dbReference>
<accession>A5F550</accession>
<accession>C3LXJ6</accession>
<proteinExistence type="inferred from homology"/>
<organism>
    <name type="scientific">Vibrio cholerae serotype O1 (strain ATCC 39541 / Classical Ogawa 395 / O395)</name>
    <dbReference type="NCBI Taxonomy" id="345073"/>
    <lineage>
        <taxon>Bacteria</taxon>
        <taxon>Pseudomonadati</taxon>
        <taxon>Pseudomonadota</taxon>
        <taxon>Gammaproteobacteria</taxon>
        <taxon>Vibrionales</taxon>
        <taxon>Vibrionaceae</taxon>
        <taxon>Vibrio</taxon>
    </lineage>
</organism>
<keyword id="KW-0687">Ribonucleoprotein</keyword>
<keyword id="KW-0689">Ribosomal protein</keyword>
<name>RS10_VIBC3</name>
<gene>
    <name evidence="1" type="primary">rpsJ</name>
    <name type="ordered locus">VC0395_A2175</name>
    <name type="ordered locus">VC395_2710</name>
</gene>
<feature type="chain" id="PRO_1000072468" description="Small ribosomal subunit protein uS10">
    <location>
        <begin position="1"/>
        <end position="103"/>
    </location>
</feature>
<comment type="function">
    <text evidence="1">Involved in the binding of tRNA to the ribosomes.</text>
</comment>
<comment type="subunit">
    <text evidence="1">Part of the 30S ribosomal subunit.</text>
</comment>
<comment type="similarity">
    <text evidence="1">Belongs to the universal ribosomal protein uS10 family.</text>
</comment>
<protein>
    <recommendedName>
        <fullName evidence="1">Small ribosomal subunit protein uS10</fullName>
    </recommendedName>
    <alternativeName>
        <fullName evidence="2">30S ribosomal protein S10</fullName>
    </alternativeName>
</protein>
<evidence type="ECO:0000255" key="1">
    <source>
        <dbReference type="HAMAP-Rule" id="MF_00508"/>
    </source>
</evidence>
<evidence type="ECO:0000305" key="2"/>
<sequence>MQNQRIRIRLKAFDYKLIDASTAEIVETAKRTGAQVRGPIPLPTRKERFTVLISPHVNKDARDQYEIRTHKRLIDIVEPTDKTVDALMRLDLAAGVDVQISLG</sequence>
<reference key="1">
    <citation type="submission" date="2007-03" db="EMBL/GenBank/DDBJ databases">
        <authorList>
            <person name="Heidelberg J."/>
        </authorList>
    </citation>
    <scope>NUCLEOTIDE SEQUENCE [LARGE SCALE GENOMIC DNA]</scope>
    <source>
        <strain>ATCC 39541 / Classical Ogawa 395 / O395</strain>
    </source>
</reference>
<reference key="2">
    <citation type="journal article" date="2008" name="PLoS ONE">
        <title>A recalibrated molecular clock and independent origins for the cholera pandemic clones.</title>
        <authorList>
            <person name="Feng L."/>
            <person name="Reeves P.R."/>
            <person name="Lan R."/>
            <person name="Ren Y."/>
            <person name="Gao C."/>
            <person name="Zhou Z."/>
            <person name="Ren Y."/>
            <person name="Cheng J."/>
            <person name="Wang W."/>
            <person name="Wang J."/>
            <person name="Qian W."/>
            <person name="Li D."/>
            <person name="Wang L."/>
        </authorList>
    </citation>
    <scope>NUCLEOTIDE SEQUENCE [LARGE SCALE GENOMIC DNA]</scope>
    <source>
        <strain>ATCC 39541 / Classical Ogawa 395 / O395</strain>
    </source>
</reference>